<accession>Q2RJ26</accession>
<keyword id="KW-0627">Porphyrin biosynthesis</keyword>
<keyword id="KW-0808">Transferase</keyword>
<evidence type="ECO:0000255" key="1">
    <source>
        <dbReference type="HAMAP-Rule" id="MF_00260"/>
    </source>
</evidence>
<protein>
    <recommendedName>
        <fullName evidence="1">Porphobilinogen deaminase</fullName>
        <shortName evidence="1">PBG</shortName>
        <ecNumber evidence="1">2.5.1.61</ecNumber>
    </recommendedName>
    <alternativeName>
        <fullName evidence="1">Hydroxymethylbilane synthase</fullName>
        <shortName evidence="1">HMBS</shortName>
    </alternativeName>
    <alternativeName>
        <fullName evidence="1">Pre-uroporphyrinogen synthase</fullName>
    </alternativeName>
</protein>
<name>HEM3_MOOTA</name>
<reference key="1">
    <citation type="journal article" date="2008" name="Environ. Microbiol.">
        <title>The complete genome sequence of Moorella thermoacetica (f. Clostridium thermoaceticum).</title>
        <authorList>
            <person name="Pierce E."/>
            <person name="Xie G."/>
            <person name="Barabote R.D."/>
            <person name="Saunders E."/>
            <person name="Han C.S."/>
            <person name="Detter J.C."/>
            <person name="Richardson P."/>
            <person name="Brettin T.S."/>
            <person name="Das A."/>
            <person name="Ljungdahl L.G."/>
            <person name="Ragsdale S.W."/>
        </authorList>
    </citation>
    <scope>NUCLEOTIDE SEQUENCE [LARGE SCALE GENOMIC DNA]</scope>
    <source>
        <strain>ATCC 39073 / JCM 9320</strain>
    </source>
</reference>
<organism>
    <name type="scientific">Moorella thermoacetica (strain ATCC 39073 / JCM 9320)</name>
    <dbReference type="NCBI Taxonomy" id="264732"/>
    <lineage>
        <taxon>Bacteria</taxon>
        <taxon>Bacillati</taxon>
        <taxon>Bacillota</taxon>
        <taxon>Clostridia</taxon>
        <taxon>Moorellales</taxon>
        <taxon>Moorellaceae</taxon>
        <taxon>Moorella</taxon>
    </lineage>
</organism>
<feature type="chain" id="PRO_1000119219" description="Porphobilinogen deaminase">
    <location>
        <begin position="1"/>
        <end position="313"/>
    </location>
</feature>
<feature type="modified residue" description="S-(dipyrrolylmethanemethyl)cysteine" evidence="1">
    <location>
        <position position="240"/>
    </location>
</feature>
<sequence>MIEIKVGSRESELARWQARWVIQALEKAWPGLSCRLVTLKTKGDKILDVALARIGDKGLFTKELELALLDGAIDLAVHSMKDMPTTLPEGLVIGAIGPREDPADVLVSPEGYTLATLPIKARVGTSSLRRKAQLAYARPDLELVDLRGNVPTRLAKMERDGLTAIVLAAAGLKRLNHGQVLGEPIPYHICLPAVGQGAIGVEIRAGDRRVAELVAAINHPPTAAAVRAERAYLRALEGGCQVPIAALATVEDTALVLQGMVASLDGREMLRDIASGSTRDPEAAGRELARKLLARGAGEILQEVKAQSGKYQG</sequence>
<gene>
    <name evidence="1" type="primary">hemC</name>
    <name type="ordered locus">Moth_1249</name>
</gene>
<dbReference type="EC" id="2.5.1.61" evidence="1"/>
<dbReference type="EMBL" id="CP000232">
    <property type="protein sequence ID" value="ABC19563.1"/>
    <property type="molecule type" value="Genomic_DNA"/>
</dbReference>
<dbReference type="RefSeq" id="YP_430106.1">
    <property type="nucleotide sequence ID" value="NC_007644.1"/>
</dbReference>
<dbReference type="SMR" id="Q2RJ26"/>
<dbReference type="STRING" id="264732.Moth_1249"/>
<dbReference type="EnsemblBacteria" id="ABC19563">
    <property type="protein sequence ID" value="ABC19563"/>
    <property type="gene ID" value="Moth_1249"/>
</dbReference>
<dbReference type="KEGG" id="mta:Moth_1249"/>
<dbReference type="PATRIC" id="fig|264732.11.peg.1341"/>
<dbReference type="eggNOG" id="COG0181">
    <property type="taxonomic scope" value="Bacteria"/>
</dbReference>
<dbReference type="HOGENOM" id="CLU_019704_0_2_9"/>
<dbReference type="OrthoDB" id="9810298at2"/>
<dbReference type="UniPathway" id="UPA00251">
    <property type="reaction ID" value="UER00319"/>
</dbReference>
<dbReference type="GO" id="GO:0005737">
    <property type="term" value="C:cytoplasm"/>
    <property type="evidence" value="ECO:0007669"/>
    <property type="project" value="TreeGrafter"/>
</dbReference>
<dbReference type="GO" id="GO:0004418">
    <property type="term" value="F:hydroxymethylbilane synthase activity"/>
    <property type="evidence" value="ECO:0007669"/>
    <property type="project" value="UniProtKB-UniRule"/>
</dbReference>
<dbReference type="GO" id="GO:0006782">
    <property type="term" value="P:protoporphyrinogen IX biosynthetic process"/>
    <property type="evidence" value="ECO:0007669"/>
    <property type="project" value="UniProtKB-UniRule"/>
</dbReference>
<dbReference type="CDD" id="cd13646">
    <property type="entry name" value="PBP2_EcHMBS_like"/>
    <property type="match status" value="1"/>
</dbReference>
<dbReference type="FunFam" id="3.30.160.40:FF:000002">
    <property type="entry name" value="Porphobilinogen deaminase"/>
    <property type="match status" value="1"/>
</dbReference>
<dbReference type="FunFam" id="3.40.190.10:FF:000004">
    <property type="entry name" value="Porphobilinogen deaminase"/>
    <property type="match status" value="1"/>
</dbReference>
<dbReference type="FunFam" id="3.40.190.10:FF:000005">
    <property type="entry name" value="Porphobilinogen deaminase"/>
    <property type="match status" value="1"/>
</dbReference>
<dbReference type="Gene3D" id="3.40.190.10">
    <property type="entry name" value="Periplasmic binding protein-like II"/>
    <property type="match status" value="2"/>
</dbReference>
<dbReference type="Gene3D" id="3.30.160.40">
    <property type="entry name" value="Porphobilinogen deaminase, C-terminal domain"/>
    <property type="match status" value="1"/>
</dbReference>
<dbReference type="HAMAP" id="MF_00260">
    <property type="entry name" value="Porphobil_deam"/>
    <property type="match status" value="1"/>
</dbReference>
<dbReference type="InterPro" id="IPR000860">
    <property type="entry name" value="HemC"/>
</dbReference>
<dbReference type="InterPro" id="IPR022417">
    <property type="entry name" value="Porphobilin_deaminase_N"/>
</dbReference>
<dbReference type="InterPro" id="IPR022418">
    <property type="entry name" value="Porphobilinogen_deaminase_C"/>
</dbReference>
<dbReference type="InterPro" id="IPR036803">
    <property type="entry name" value="Porphobilinogen_deaminase_C_sf"/>
</dbReference>
<dbReference type="NCBIfam" id="TIGR00212">
    <property type="entry name" value="hemC"/>
    <property type="match status" value="1"/>
</dbReference>
<dbReference type="PANTHER" id="PTHR11557">
    <property type="entry name" value="PORPHOBILINOGEN DEAMINASE"/>
    <property type="match status" value="1"/>
</dbReference>
<dbReference type="PANTHER" id="PTHR11557:SF0">
    <property type="entry name" value="PORPHOBILINOGEN DEAMINASE"/>
    <property type="match status" value="1"/>
</dbReference>
<dbReference type="Pfam" id="PF01379">
    <property type="entry name" value="Porphobil_deam"/>
    <property type="match status" value="1"/>
</dbReference>
<dbReference type="Pfam" id="PF03900">
    <property type="entry name" value="Porphobil_deamC"/>
    <property type="match status" value="1"/>
</dbReference>
<dbReference type="PIRSF" id="PIRSF001438">
    <property type="entry name" value="4pyrrol_synth_OHMeBilane_synth"/>
    <property type="match status" value="1"/>
</dbReference>
<dbReference type="PRINTS" id="PR00151">
    <property type="entry name" value="PORPHBDMNASE"/>
</dbReference>
<dbReference type="SUPFAM" id="SSF53850">
    <property type="entry name" value="Periplasmic binding protein-like II"/>
    <property type="match status" value="1"/>
</dbReference>
<dbReference type="SUPFAM" id="SSF54782">
    <property type="entry name" value="Porphobilinogen deaminase (hydroxymethylbilane synthase), C-terminal domain"/>
    <property type="match status" value="1"/>
</dbReference>
<proteinExistence type="inferred from homology"/>
<comment type="function">
    <text evidence="1">Tetrapolymerization of the monopyrrole PBG into the hydroxymethylbilane pre-uroporphyrinogen in several discrete steps.</text>
</comment>
<comment type="catalytic activity">
    <reaction evidence="1">
        <text>4 porphobilinogen + H2O = hydroxymethylbilane + 4 NH4(+)</text>
        <dbReference type="Rhea" id="RHEA:13185"/>
        <dbReference type="ChEBI" id="CHEBI:15377"/>
        <dbReference type="ChEBI" id="CHEBI:28938"/>
        <dbReference type="ChEBI" id="CHEBI:57845"/>
        <dbReference type="ChEBI" id="CHEBI:58126"/>
        <dbReference type="EC" id="2.5.1.61"/>
    </reaction>
</comment>
<comment type="cofactor">
    <cofactor evidence="1">
        <name>dipyrromethane</name>
        <dbReference type="ChEBI" id="CHEBI:60342"/>
    </cofactor>
    <text evidence="1">Binds 1 dipyrromethane group covalently.</text>
</comment>
<comment type="pathway">
    <text evidence="1">Porphyrin-containing compound metabolism; protoporphyrin-IX biosynthesis; coproporphyrinogen-III from 5-aminolevulinate: step 2/4.</text>
</comment>
<comment type="subunit">
    <text evidence="1">Monomer.</text>
</comment>
<comment type="miscellaneous">
    <text evidence="1">The porphobilinogen subunits are added to the dipyrromethane group.</text>
</comment>
<comment type="similarity">
    <text evidence="1">Belongs to the HMBS family.</text>
</comment>